<comment type="catalytic activity">
    <reaction evidence="1">
        <text>beta-D-fructose 1,6-bisphosphate + H2O = beta-D-fructose 6-phosphate + phosphate</text>
        <dbReference type="Rhea" id="RHEA:11064"/>
        <dbReference type="ChEBI" id="CHEBI:15377"/>
        <dbReference type="ChEBI" id="CHEBI:32966"/>
        <dbReference type="ChEBI" id="CHEBI:43474"/>
        <dbReference type="ChEBI" id="CHEBI:57634"/>
        <dbReference type="EC" id="3.1.3.11"/>
    </reaction>
</comment>
<comment type="cofactor">
    <cofactor evidence="1">
        <name>Mg(2+)</name>
        <dbReference type="ChEBI" id="CHEBI:18420"/>
    </cofactor>
    <text evidence="1">Binds 2 magnesium ions per subunit.</text>
</comment>
<comment type="pathway">
    <text evidence="1">Carbohydrate biosynthesis; gluconeogenesis.</text>
</comment>
<comment type="subunit">
    <text evidence="1">Homotetramer.</text>
</comment>
<comment type="subcellular location">
    <subcellularLocation>
        <location evidence="1">Cytoplasm</location>
    </subcellularLocation>
</comment>
<comment type="similarity">
    <text evidence="1">Belongs to the FBPase class 1 family.</text>
</comment>
<reference key="1">
    <citation type="submission" date="2006-03" db="EMBL/GenBank/DDBJ databases">
        <title>Complete sequence of plasmid 1 of Nitrobacter hamburgensis X14.</title>
        <authorList>
            <consortium name="US DOE Joint Genome Institute"/>
            <person name="Copeland A."/>
            <person name="Lucas S."/>
            <person name="Lapidus A."/>
            <person name="Barry K."/>
            <person name="Detter J.C."/>
            <person name="Glavina del Rio T."/>
            <person name="Hammon N."/>
            <person name="Israni S."/>
            <person name="Dalin E."/>
            <person name="Tice H."/>
            <person name="Pitluck S."/>
            <person name="Chain P."/>
            <person name="Malfatti S."/>
            <person name="Shin M."/>
            <person name="Vergez L."/>
            <person name="Schmutz J."/>
            <person name="Larimer F."/>
            <person name="Land M."/>
            <person name="Hauser L."/>
            <person name="Kyrpides N."/>
            <person name="Ivanova N."/>
            <person name="Ward B."/>
            <person name="Arp D."/>
            <person name="Klotz M."/>
            <person name="Stein L."/>
            <person name="O'Mullan G."/>
            <person name="Starkenburg S."/>
            <person name="Sayavedra L."/>
            <person name="Poret-Peterson A.T."/>
            <person name="Gentry M.E."/>
            <person name="Bruce D."/>
            <person name="Richardson P."/>
        </authorList>
    </citation>
    <scope>NUCLEOTIDE SEQUENCE [LARGE SCALE GENOMIC DNA]</scope>
    <source>
        <strain>DSM 10229 / NCIMB 13809 / X14</strain>
    </source>
</reference>
<name>F16A2_NITHX</name>
<gene>
    <name evidence="1" type="primary">fbp2</name>
    <name type="ordered locus">Nham_4046</name>
</gene>
<protein>
    <recommendedName>
        <fullName evidence="1">Fructose-1,6-bisphosphatase class 1 2</fullName>
        <shortName evidence="1">FBPase class 1 2</shortName>
        <ecNumber evidence="1">3.1.3.11</ecNumber>
    </recommendedName>
    <alternativeName>
        <fullName evidence="1">D-fructose-1,6-bisphosphate 1-phosphohydrolase class 1 2</fullName>
    </alternativeName>
</protein>
<geneLocation type="plasmid">
    <name>pNITHX1</name>
</geneLocation>
<organism>
    <name type="scientific">Nitrobacter hamburgensis (strain DSM 10229 / NCIMB 13809 / X14)</name>
    <dbReference type="NCBI Taxonomy" id="323097"/>
    <lineage>
        <taxon>Bacteria</taxon>
        <taxon>Pseudomonadati</taxon>
        <taxon>Pseudomonadota</taxon>
        <taxon>Alphaproteobacteria</taxon>
        <taxon>Hyphomicrobiales</taxon>
        <taxon>Nitrobacteraceae</taxon>
        <taxon>Nitrobacter</taxon>
    </lineage>
</organism>
<keyword id="KW-0119">Carbohydrate metabolism</keyword>
<keyword id="KW-0963">Cytoplasm</keyword>
<keyword id="KW-0378">Hydrolase</keyword>
<keyword id="KW-0460">Magnesium</keyword>
<keyword id="KW-0479">Metal-binding</keyword>
<keyword id="KW-0614">Plasmid</keyword>
<keyword id="KW-1185">Reference proteome</keyword>
<feature type="chain" id="PRO_0000364613" description="Fructose-1,6-bisphosphatase class 1 2">
    <location>
        <begin position="1"/>
        <end position="345"/>
    </location>
</feature>
<feature type="binding site" evidence="1">
    <location>
        <position position="90"/>
    </location>
    <ligand>
        <name>Mg(2+)</name>
        <dbReference type="ChEBI" id="CHEBI:18420"/>
        <label>1</label>
    </ligand>
</feature>
<feature type="binding site" evidence="1">
    <location>
        <position position="109"/>
    </location>
    <ligand>
        <name>Mg(2+)</name>
        <dbReference type="ChEBI" id="CHEBI:18420"/>
        <label>1</label>
    </ligand>
</feature>
<feature type="binding site" evidence="1">
    <location>
        <position position="109"/>
    </location>
    <ligand>
        <name>Mg(2+)</name>
        <dbReference type="ChEBI" id="CHEBI:18420"/>
        <label>2</label>
    </ligand>
</feature>
<feature type="binding site" evidence="1">
    <location>
        <position position="111"/>
    </location>
    <ligand>
        <name>Mg(2+)</name>
        <dbReference type="ChEBI" id="CHEBI:18420"/>
        <label>1</label>
    </ligand>
</feature>
<feature type="binding site" evidence="1">
    <location>
        <begin position="112"/>
        <end position="115"/>
    </location>
    <ligand>
        <name>substrate</name>
    </ligand>
</feature>
<feature type="binding site" evidence="1">
    <location>
        <position position="112"/>
    </location>
    <ligand>
        <name>Mg(2+)</name>
        <dbReference type="ChEBI" id="CHEBI:18420"/>
        <label>2</label>
    </ligand>
</feature>
<feature type="binding site" evidence="1">
    <location>
        <position position="200"/>
    </location>
    <ligand>
        <name>substrate</name>
    </ligand>
</feature>
<feature type="binding site" evidence="1">
    <location>
        <position position="272"/>
    </location>
    <ligand>
        <name>Mg(2+)</name>
        <dbReference type="ChEBI" id="CHEBI:18420"/>
        <label>2</label>
    </ligand>
</feature>
<dbReference type="EC" id="3.1.3.11" evidence="1"/>
<dbReference type="EMBL" id="CP000320">
    <property type="protein sequence ID" value="ABE64710.1"/>
    <property type="molecule type" value="Genomic_DNA"/>
</dbReference>
<dbReference type="RefSeq" id="WP_011505025.1">
    <property type="nucleotide sequence ID" value="NC_007959.1"/>
</dbReference>
<dbReference type="SMR" id="Q1QGD7"/>
<dbReference type="KEGG" id="nha:Nham_4046"/>
<dbReference type="HOGENOM" id="CLU_039977_0_0_5"/>
<dbReference type="OrthoDB" id="9806756at2"/>
<dbReference type="UniPathway" id="UPA00138"/>
<dbReference type="Proteomes" id="UP000001953">
    <property type="component" value="Plasmid pNITHX1"/>
</dbReference>
<dbReference type="GO" id="GO:0005829">
    <property type="term" value="C:cytosol"/>
    <property type="evidence" value="ECO:0007669"/>
    <property type="project" value="TreeGrafter"/>
</dbReference>
<dbReference type="GO" id="GO:0042132">
    <property type="term" value="F:fructose 1,6-bisphosphate 1-phosphatase activity"/>
    <property type="evidence" value="ECO:0007669"/>
    <property type="project" value="UniProtKB-UniRule"/>
</dbReference>
<dbReference type="GO" id="GO:0000287">
    <property type="term" value="F:magnesium ion binding"/>
    <property type="evidence" value="ECO:0007669"/>
    <property type="project" value="UniProtKB-UniRule"/>
</dbReference>
<dbReference type="GO" id="GO:0030388">
    <property type="term" value="P:fructose 1,6-bisphosphate metabolic process"/>
    <property type="evidence" value="ECO:0007669"/>
    <property type="project" value="TreeGrafter"/>
</dbReference>
<dbReference type="GO" id="GO:0006002">
    <property type="term" value="P:fructose 6-phosphate metabolic process"/>
    <property type="evidence" value="ECO:0007669"/>
    <property type="project" value="TreeGrafter"/>
</dbReference>
<dbReference type="GO" id="GO:0006000">
    <property type="term" value="P:fructose metabolic process"/>
    <property type="evidence" value="ECO:0007669"/>
    <property type="project" value="TreeGrafter"/>
</dbReference>
<dbReference type="GO" id="GO:0006094">
    <property type="term" value="P:gluconeogenesis"/>
    <property type="evidence" value="ECO:0007669"/>
    <property type="project" value="UniProtKB-UniRule"/>
</dbReference>
<dbReference type="GO" id="GO:0005986">
    <property type="term" value="P:sucrose biosynthetic process"/>
    <property type="evidence" value="ECO:0007669"/>
    <property type="project" value="TreeGrafter"/>
</dbReference>
<dbReference type="CDD" id="cd00354">
    <property type="entry name" value="FBPase"/>
    <property type="match status" value="1"/>
</dbReference>
<dbReference type="FunFam" id="3.40.190.80:FF:000011">
    <property type="entry name" value="Fructose-1,6-bisphosphatase class 1"/>
    <property type="match status" value="1"/>
</dbReference>
<dbReference type="Gene3D" id="3.40.190.80">
    <property type="match status" value="1"/>
</dbReference>
<dbReference type="Gene3D" id="3.30.540.10">
    <property type="entry name" value="Fructose-1,6-Bisphosphatase, subunit A, domain 1"/>
    <property type="match status" value="1"/>
</dbReference>
<dbReference type="HAMAP" id="MF_01855">
    <property type="entry name" value="FBPase_class1"/>
    <property type="match status" value="1"/>
</dbReference>
<dbReference type="InterPro" id="IPR044015">
    <property type="entry name" value="FBPase_C_dom"/>
</dbReference>
<dbReference type="InterPro" id="IPR000146">
    <property type="entry name" value="FBPase_class-1"/>
</dbReference>
<dbReference type="InterPro" id="IPR033391">
    <property type="entry name" value="FBPase_N"/>
</dbReference>
<dbReference type="InterPro" id="IPR028343">
    <property type="entry name" value="FBPtase"/>
</dbReference>
<dbReference type="InterPro" id="IPR020548">
    <property type="entry name" value="Fructose_bisphosphatase_AS"/>
</dbReference>
<dbReference type="NCBIfam" id="NF006779">
    <property type="entry name" value="PRK09293.1-3"/>
    <property type="match status" value="1"/>
</dbReference>
<dbReference type="NCBIfam" id="NF006780">
    <property type="entry name" value="PRK09293.1-4"/>
    <property type="match status" value="1"/>
</dbReference>
<dbReference type="PANTHER" id="PTHR11556">
    <property type="entry name" value="FRUCTOSE-1,6-BISPHOSPHATASE-RELATED"/>
    <property type="match status" value="1"/>
</dbReference>
<dbReference type="PANTHER" id="PTHR11556:SF35">
    <property type="entry name" value="SEDOHEPTULOSE-1,7-BISPHOSPHATASE, CHLOROPLASTIC"/>
    <property type="match status" value="1"/>
</dbReference>
<dbReference type="Pfam" id="PF00316">
    <property type="entry name" value="FBPase"/>
    <property type="match status" value="1"/>
</dbReference>
<dbReference type="Pfam" id="PF18913">
    <property type="entry name" value="FBPase_C"/>
    <property type="match status" value="1"/>
</dbReference>
<dbReference type="PIRSF" id="PIRSF500210">
    <property type="entry name" value="FBPtase"/>
    <property type="match status" value="1"/>
</dbReference>
<dbReference type="PIRSF" id="PIRSF000904">
    <property type="entry name" value="FBPtase_SBPase"/>
    <property type="match status" value="1"/>
</dbReference>
<dbReference type="PRINTS" id="PR00115">
    <property type="entry name" value="F16BPHPHTASE"/>
</dbReference>
<dbReference type="SUPFAM" id="SSF56655">
    <property type="entry name" value="Carbohydrate phosphatase"/>
    <property type="match status" value="1"/>
</dbReference>
<dbReference type="PROSITE" id="PS00124">
    <property type="entry name" value="FBPASE"/>
    <property type="match status" value="1"/>
</dbReference>
<accession>Q1QGD7</accession>
<proteinExistence type="inferred from homology"/>
<sequence length="345" mass="37031">MSHELTLQQRLEVQAGPDPLHRAVKEAVAALAQAAIDISDLTCRGALAGITGEAQGRNTDGDIQKDLDVRADQIIRDALSALPIAVLASEEMAELDILNPGAPISVAFDPLDGSSNINTNISVGTIFSIMPTPPDASAAFTQPGSAQLAAGFVVYGPQTSLILTLGQGVDIFTLDRVERVFKLTGSMMQIPADATEFAINTSNRRHWDLPVRAYIDECLMGADGPSGKNFNMRWIGSLVAEAFRILVRGGIFLYPGDARDGYEDGRLRLVYEAHPMAFIIEQAGGGASTGRKRILDIVPGSLHQRVPLIMGSIKNVRRLEDMHTGPNVALEANAPLFGHRGLFRV</sequence>
<evidence type="ECO:0000255" key="1">
    <source>
        <dbReference type="HAMAP-Rule" id="MF_01855"/>
    </source>
</evidence>